<proteinExistence type="inferred from homology"/>
<reference key="1">
    <citation type="journal article" date="2005" name="Proc. Natl. Acad. Sci. U.S.A.">
        <title>Whole genome sequence of Staphylococcus saprophyticus reveals the pathogenesis of uncomplicated urinary tract infection.</title>
        <authorList>
            <person name="Kuroda M."/>
            <person name="Yamashita A."/>
            <person name="Hirakawa H."/>
            <person name="Kumano M."/>
            <person name="Morikawa K."/>
            <person name="Higashide M."/>
            <person name="Maruyama A."/>
            <person name="Inose Y."/>
            <person name="Matoba K."/>
            <person name="Toh H."/>
            <person name="Kuhara S."/>
            <person name="Hattori M."/>
            <person name="Ohta T."/>
        </authorList>
    </citation>
    <scope>NUCLEOTIDE SEQUENCE [LARGE SCALE GENOMIC DNA]</scope>
    <source>
        <strain>ATCC 15305 / DSM 20229 / NCIMB 8711 / NCTC 7292 / S-41</strain>
    </source>
</reference>
<feature type="chain" id="PRO_0000068718" description="Bifunctional protein GlmU">
    <location>
        <begin position="1"/>
        <end position="451"/>
    </location>
</feature>
<feature type="region of interest" description="Pyrophosphorylase" evidence="1">
    <location>
        <begin position="1"/>
        <end position="229"/>
    </location>
</feature>
<feature type="region of interest" description="Linker" evidence="1">
    <location>
        <begin position="230"/>
        <end position="250"/>
    </location>
</feature>
<feature type="region of interest" description="N-acetyltransferase" evidence="1">
    <location>
        <begin position="251"/>
        <end position="451"/>
    </location>
</feature>
<feature type="active site" description="Proton acceptor" evidence="1">
    <location>
        <position position="362"/>
    </location>
</feature>
<feature type="binding site" evidence="1">
    <location>
        <begin position="8"/>
        <end position="11"/>
    </location>
    <ligand>
        <name>UDP-N-acetyl-alpha-D-glucosamine</name>
        <dbReference type="ChEBI" id="CHEBI:57705"/>
    </ligand>
</feature>
<feature type="binding site" evidence="1">
    <location>
        <position position="22"/>
    </location>
    <ligand>
        <name>UDP-N-acetyl-alpha-D-glucosamine</name>
        <dbReference type="ChEBI" id="CHEBI:57705"/>
    </ligand>
</feature>
<feature type="binding site" evidence="1">
    <location>
        <position position="72"/>
    </location>
    <ligand>
        <name>UDP-N-acetyl-alpha-D-glucosamine</name>
        <dbReference type="ChEBI" id="CHEBI:57705"/>
    </ligand>
</feature>
<feature type="binding site" evidence="1">
    <location>
        <begin position="77"/>
        <end position="78"/>
    </location>
    <ligand>
        <name>UDP-N-acetyl-alpha-D-glucosamine</name>
        <dbReference type="ChEBI" id="CHEBI:57705"/>
    </ligand>
</feature>
<feature type="binding site" evidence="1">
    <location>
        <position position="102"/>
    </location>
    <ligand>
        <name>Mg(2+)</name>
        <dbReference type="ChEBI" id="CHEBI:18420"/>
    </ligand>
</feature>
<feature type="binding site" evidence="1">
    <location>
        <position position="139"/>
    </location>
    <ligand>
        <name>UDP-N-acetyl-alpha-D-glucosamine</name>
        <dbReference type="ChEBI" id="CHEBI:57705"/>
    </ligand>
</feature>
<feature type="binding site" evidence="1">
    <location>
        <position position="154"/>
    </location>
    <ligand>
        <name>UDP-N-acetyl-alpha-D-glucosamine</name>
        <dbReference type="ChEBI" id="CHEBI:57705"/>
    </ligand>
</feature>
<feature type="binding site" evidence="1">
    <location>
        <position position="227"/>
    </location>
    <ligand>
        <name>Mg(2+)</name>
        <dbReference type="ChEBI" id="CHEBI:18420"/>
    </ligand>
</feature>
<feature type="binding site" evidence="1">
    <location>
        <position position="227"/>
    </location>
    <ligand>
        <name>UDP-N-acetyl-alpha-D-glucosamine</name>
        <dbReference type="ChEBI" id="CHEBI:57705"/>
    </ligand>
</feature>
<feature type="binding site" evidence="1">
    <location>
        <position position="332"/>
    </location>
    <ligand>
        <name>UDP-N-acetyl-alpha-D-glucosamine</name>
        <dbReference type="ChEBI" id="CHEBI:57705"/>
    </ligand>
</feature>
<feature type="binding site" evidence="1">
    <location>
        <position position="350"/>
    </location>
    <ligand>
        <name>UDP-N-acetyl-alpha-D-glucosamine</name>
        <dbReference type="ChEBI" id="CHEBI:57705"/>
    </ligand>
</feature>
<feature type="binding site" evidence="1">
    <location>
        <position position="365"/>
    </location>
    <ligand>
        <name>UDP-N-acetyl-alpha-D-glucosamine</name>
        <dbReference type="ChEBI" id="CHEBI:57705"/>
    </ligand>
</feature>
<feature type="binding site" evidence="1">
    <location>
        <position position="376"/>
    </location>
    <ligand>
        <name>UDP-N-acetyl-alpha-D-glucosamine</name>
        <dbReference type="ChEBI" id="CHEBI:57705"/>
    </ligand>
</feature>
<feature type="binding site" evidence="1">
    <location>
        <begin position="385"/>
        <end position="386"/>
    </location>
    <ligand>
        <name>acetyl-CoA</name>
        <dbReference type="ChEBI" id="CHEBI:57288"/>
    </ligand>
</feature>
<feature type="binding site" evidence="1">
    <location>
        <position position="422"/>
    </location>
    <ligand>
        <name>acetyl-CoA</name>
        <dbReference type="ChEBI" id="CHEBI:57288"/>
    </ligand>
</feature>
<feature type="binding site" evidence="1">
    <location>
        <position position="439"/>
    </location>
    <ligand>
        <name>acetyl-CoA</name>
        <dbReference type="ChEBI" id="CHEBI:57288"/>
    </ligand>
</feature>
<protein>
    <recommendedName>
        <fullName evidence="1">Bifunctional protein GlmU</fullName>
    </recommendedName>
    <domain>
        <recommendedName>
            <fullName evidence="1">UDP-N-acetylglucosamine pyrophosphorylase</fullName>
            <ecNumber evidence="1">2.7.7.23</ecNumber>
        </recommendedName>
        <alternativeName>
            <fullName evidence="1">N-acetylglucosamine-1-phosphate uridyltransferase</fullName>
        </alternativeName>
    </domain>
    <domain>
        <recommendedName>
            <fullName evidence="1">Glucosamine-1-phosphate N-acetyltransferase</fullName>
            <ecNumber evidence="1">2.3.1.157</ecNumber>
        </recommendedName>
    </domain>
</protein>
<evidence type="ECO:0000255" key="1">
    <source>
        <dbReference type="HAMAP-Rule" id="MF_01631"/>
    </source>
</evidence>
<sequence>MQRHAIVLAAGKGTRMKSKKYKVLHDVAGKTMIEHVADNVKQSGIDQLVTIVGHGADSVKETLGDTSLYSFQEEQLGTAHAVKMASEHLSESQGTTLVVCGDTPLITTATLKSLVEHHENNQAHATVLSATAENPFGYGRILRDSEGRLVSIVEQKDATDAEQQINEISSGIFAFDNQVLFEKLELVKNDNAQSEYYLPDVLSLILEDRGIVEVFHTNDFEEIMGVNDRVMLSEAEKAFRKRINEQHMKNGVTIIDPVTTYIGADVRIGEDTVVEPGVKLSGNSVIGEDTVIGQHTEITNSKIGSNVTIKQSVINEAIVDDYATIGPFAQLRPGADLGKKVKVGNFVEVKKSVVKAGAKLPHLSYIGDAEIGERTNVGCGSITVNYDGINKFKTVIGDDSFIGCNTNLVAPITLGNRSFIAAGSTITDNVPEDSLALARARQTTKEGYLKK</sequence>
<accession>Q49V08</accession>
<organism>
    <name type="scientific">Staphylococcus saprophyticus subsp. saprophyticus (strain ATCC 15305 / DSM 20229 / NCIMB 8711 / NCTC 7292 / S-41)</name>
    <dbReference type="NCBI Taxonomy" id="342451"/>
    <lineage>
        <taxon>Bacteria</taxon>
        <taxon>Bacillati</taxon>
        <taxon>Bacillota</taxon>
        <taxon>Bacilli</taxon>
        <taxon>Bacillales</taxon>
        <taxon>Staphylococcaceae</taxon>
        <taxon>Staphylococcus</taxon>
    </lineage>
</organism>
<name>GLMU_STAS1</name>
<comment type="function">
    <text evidence="1">Catalyzes the last two sequential reactions in the de novo biosynthetic pathway for UDP-N-acetylglucosamine (UDP-GlcNAc). The C-terminal domain catalyzes the transfer of acetyl group from acetyl coenzyme A to glucosamine-1-phosphate (GlcN-1-P) to produce N-acetylglucosamine-1-phosphate (GlcNAc-1-P), which is converted into UDP-GlcNAc by the transfer of uridine 5-monophosphate (from uridine 5-triphosphate), a reaction catalyzed by the N-terminal domain.</text>
</comment>
<comment type="catalytic activity">
    <reaction evidence="1">
        <text>alpha-D-glucosamine 1-phosphate + acetyl-CoA = N-acetyl-alpha-D-glucosamine 1-phosphate + CoA + H(+)</text>
        <dbReference type="Rhea" id="RHEA:13725"/>
        <dbReference type="ChEBI" id="CHEBI:15378"/>
        <dbReference type="ChEBI" id="CHEBI:57287"/>
        <dbReference type="ChEBI" id="CHEBI:57288"/>
        <dbReference type="ChEBI" id="CHEBI:57776"/>
        <dbReference type="ChEBI" id="CHEBI:58516"/>
        <dbReference type="EC" id="2.3.1.157"/>
    </reaction>
</comment>
<comment type="catalytic activity">
    <reaction evidence="1">
        <text>N-acetyl-alpha-D-glucosamine 1-phosphate + UTP + H(+) = UDP-N-acetyl-alpha-D-glucosamine + diphosphate</text>
        <dbReference type="Rhea" id="RHEA:13509"/>
        <dbReference type="ChEBI" id="CHEBI:15378"/>
        <dbReference type="ChEBI" id="CHEBI:33019"/>
        <dbReference type="ChEBI" id="CHEBI:46398"/>
        <dbReference type="ChEBI" id="CHEBI:57705"/>
        <dbReference type="ChEBI" id="CHEBI:57776"/>
        <dbReference type="EC" id="2.7.7.23"/>
    </reaction>
</comment>
<comment type="cofactor">
    <cofactor evidence="1">
        <name>Mg(2+)</name>
        <dbReference type="ChEBI" id="CHEBI:18420"/>
    </cofactor>
    <text evidence="1">Binds 1 Mg(2+) ion per subunit.</text>
</comment>
<comment type="pathway">
    <text evidence="1">Nucleotide-sugar biosynthesis; UDP-N-acetyl-alpha-D-glucosamine biosynthesis; N-acetyl-alpha-D-glucosamine 1-phosphate from alpha-D-glucosamine 6-phosphate (route II): step 2/2.</text>
</comment>
<comment type="pathway">
    <text evidence="1">Nucleotide-sugar biosynthesis; UDP-N-acetyl-alpha-D-glucosamine biosynthesis; UDP-N-acetyl-alpha-D-glucosamine from N-acetyl-alpha-D-glucosamine 1-phosphate: step 1/1.</text>
</comment>
<comment type="pathway">
    <text evidence="1">Bacterial outer membrane biogenesis; LPS lipid A biosynthesis.</text>
</comment>
<comment type="subunit">
    <text evidence="1">Homotrimer.</text>
</comment>
<comment type="subcellular location">
    <subcellularLocation>
        <location evidence="1">Cytoplasm</location>
    </subcellularLocation>
</comment>
<comment type="similarity">
    <text evidence="1">In the N-terminal section; belongs to the N-acetylglucosamine-1-phosphate uridyltransferase family.</text>
</comment>
<comment type="similarity">
    <text evidence="1">In the C-terminal section; belongs to the transferase hexapeptide repeat family.</text>
</comment>
<gene>
    <name evidence="1" type="primary">glmU</name>
    <name type="synonym">gcaD</name>
    <name type="ordered locus">SSP2257</name>
</gene>
<dbReference type="EC" id="2.7.7.23" evidence="1"/>
<dbReference type="EC" id="2.3.1.157" evidence="1"/>
<dbReference type="EMBL" id="AP008934">
    <property type="protein sequence ID" value="BAE19402.1"/>
    <property type="molecule type" value="Genomic_DNA"/>
</dbReference>
<dbReference type="RefSeq" id="WP_011303872.1">
    <property type="nucleotide sequence ID" value="NZ_MTGA01000029.1"/>
</dbReference>
<dbReference type="SMR" id="Q49V08"/>
<dbReference type="GeneID" id="3615587"/>
<dbReference type="KEGG" id="ssp:SSP2257"/>
<dbReference type="PATRIC" id="fig|342451.11.peg.2248"/>
<dbReference type="eggNOG" id="COG1207">
    <property type="taxonomic scope" value="Bacteria"/>
</dbReference>
<dbReference type="HOGENOM" id="CLU_029499_15_2_9"/>
<dbReference type="OrthoDB" id="9775031at2"/>
<dbReference type="UniPathway" id="UPA00113">
    <property type="reaction ID" value="UER00532"/>
</dbReference>
<dbReference type="UniPathway" id="UPA00113">
    <property type="reaction ID" value="UER00533"/>
</dbReference>
<dbReference type="UniPathway" id="UPA00973"/>
<dbReference type="Proteomes" id="UP000006371">
    <property type="component" value="Chromosome"/>
</dbReference>
<dbReference type="GO" id="GO:0005737">
    <property type="term" value="C:cytoplasm"/>
    <property type="evidence" value="ECO:0007669"/>
    <property type="project" value="UniProtKB-SubCell"/>
</dbReference>
<dbReference type="GO" id="GO:0016020">
    <property type="term" value="C:membrane"/>
    <property type="evidence" value="ECO:0007669"/>
    <property type="project" value="GOC"/>
</dbReference>
<dbReference type="GO" id="GO:0019134">
    <property type="term" value="F:glucosamine-1-phosphate N-acetyltransferase activity"/>
    <property type="evidence" value="ECO:0007669"/>
    <property type="project" value="UniProtKB-UniRule"/>
</dbReference>
<dbReference type="GO" id="GO:0000287">
    <property type="term" value="F:magnesium ion binding"/>
    <property type="evidence" value="ECO:0007669"/>
    <property type="project" value="UniProtKB-UniRule"/>
</dbReference>
<dbReference type="GO" id="GO:0003977">
    <property type="term" value="F:UDP-N-acetylglucosamine diphosphorylase activity"/>
    <property type="evidence" value="ECO:0007669"/>
    <property type="project" value="UniProtKB-UniRule"/>
</dbReference>
<dbReference type="GO" id="GO:0000902">
    <property type="term" value="P:cell morphogenesis"/>
    <property type="evidence" value="ECO:0007669"/>
    <property type="project" value="UniProtKB-UniRule"/>
</dbReference>
<dbReference type="GO" id="GO:0071555">
    <property type="term" value="P:cell wall organization"/>
    <property type="evidence" value="ECO:0007669"/>
    <property type="project" value="UniProtKB-KW"/>
</dbReference>
<dbReference type="GO" id="GO:0009245">
    <property type="term" value="P:lipid A biosynthetic process"/>
    <property type="evidence" value="ECO:0007669"/>
    <property type="project" value="UniProtKB-UniRule"/>
</dbReference>
<dbReference type="GO" id="GO:0009252">
    <property type="term" value="P:peptidoglycan biosynthetic process"/>
    <property type="evidence" value="ECO:0007669"/>
    <property type="project" value="UniProtKB-UniRule"/>
</dbReference>
<dbReference type="GO" id="GO:0008360">
    <property type="term" value="P:regulation of cell shape"/>
    <property type="evidence" value="ECO:0007669"/>
    <property type="project" value="UniProtKB-KW"/>
</dbReference>
<dbReference type="GO" id="GO:0006048">
    <property type="term" value="P:UDP-N-acetylglucosamine biosynthetic process"/>
    <property type="evidence" value="ECO:0007669"/>
    <property type="project" value="UniProtKB-UniPathway"/>
</dbReference>
<dbReference type="CDD" id="cd02540">
    <property type="entry name" value="GT2_GlmU_N_bac"/>
    <property type="match status" value="1"/>
</dbReference>
<dbReference type="CDD" id="cd03353">
    <property type="entry name" value="LbH_GlmU_C"/>
    <property type="match status" value="1"/>
</dbReference>
<dbReference type="Gene3D" id="2.160.10.10">
    <property type="entry name" value="Hexapeptide repeat proteins"/>
    <property type="match status" value="1"/>
</dbReference>
<dbReference type="Gene3D" id="3.90.550.10">
    <property type="entry name" value="Spore Coat Polysaccharide Biosynthesis Protein SpsA, Chain A"/>
    <property type="match status" value="1"/>
</dbReference>
<dbReference type="HAMAP" id="MF_01631">
    <property type="entry name" value="GlmU"/>
    <property type="match status" value="1"/>
</dbReference>
<dbReference type="InterPro" id="IPR005882">
    <property type="entry name" value="Bifunctional_GlmU"/>
</dbReference>
<dbReference type="InterPro" id="IPR050065">
    <property type="entry name" value="GlmU-like"/>
</dbReference>
<dbReference type="InterPro" id="IPR038009">
    <property type="entry name" value="GlmU_C_LbH"/>
</dbReference>
<dbReference type="InterPro" id="IPR001451">
    <property type="entry name" value="Hexapep"/>
</dbReference>
<dbReference type="InterPro" id="IPR018357">
    <property type="entry name" value="Hexapep_transf_CS"/>
</dbReference>
<dbReference type="InterPro" id="IPR005835">
    <property type="entry name" value="NTP_transferase_dom"/>
</dbReference>
<dbReference type="InterPro" id="IPR029044">
    <property type="entry name" value="Nucleotide-diphossugar_trans"/>
</dbReference>
<dbReference type="InterPro" id="IPR011004">
    <property type="entry name" value="Trimer_LpxA-like_sf"/>
</dbReference>
<dbReference type="NCBIfam" id="TIGR01173">
    <property type="entry name" value="glmU"/>
    <property type="match status" value="1"/>
</dbReference>
<dbReference type="NCBIfam" id="NF010934">
    <property type="entry name" value="PRK14354.1"/>
    <property type="match status" value="1"/>
</dbReference>
<dbReference type="PANTHER" id="PTHR43584:SF3">
    <property type="entry name" value="BIFUNCTIONAL PROTEIN GLMU"/>
    <property type="match status" value="1"/>
</dbReference>
<dbReference type="PANTHER" id="PTHR43584">
    <property type="entry name" value="NUCLEOTIDYL TRANSFERASE"/>
    <property type="match status" value="1"/>
</dbReference>
<dbReference type="Pfam" id="PF00132">
    <property type="entry name" value="Hexapep"/>
    <property type="match status" value="2"/>
</dbReference>
<dbReference type="Pfam" id="PF00483">
    <property type="entry name" value="NTP_transferase"/>
    <property type="match status" value="1"/>
</dbReference>
<dbReference type="SUPFAM" id="SSF53448">
    <property type="entry name" value="Nucleotide-diphospho-sugar transferases"/>
    <property type="match status" value="1"/>
</dbReference>
<dbReference type="SUPFAM" id="SSF51161">
    <property type="entry name" value="Trimeric LpxA-like enzymes"/>
    <property type="match status" value="1"/>
</dbReference>
<dbReference type="PROSITE" id="PS00101">
    <property type="entry name" value="HEXAPEP_TRANSFERASES"/>
    <property type="match status" value="2"/>
</dbReference>
<keyword id="KW-0012">Acyltransferase</keyword>
<keyword id="KW-0133">Cell shape</keyword>
<keyword id="KW-0961">Cell wall biogenesis/degradation</keyword>
<keyword id="KW-0963">Cytoplasm</keyword>
<keyword id="KW-0460">Magnesium</keyword>
<keyword id="KW-0479">Metal-binding</keyword>
<keyword id="KW-0511">Multifunctional enzyme</keyword>
<keyword id="KW-0548">Nucleotidyltransferase</keyword>
<keyword id="KW-0573">Peptidoglycan synthesis</keyword>
<keyword id="KW-1185">Reference proteome</keyword>
<keyword id="KW-0677">Repeat</keyword>
<keyword id="KW-0808">Transferase</keyword>